<organism>
    <name type="scientific">Phalaenopsis aphrodite subsp. formosana</name>
    <name type="common">Moth orchid</name>
    <dbReference type="NCBI Taxonomy" id="308872"/>
    <lineage>
        <taxon>Eukaryota</taxon>
        <taxon>Viridiplantae</taxon>
        <taxon>Streptophyta</taxon>
        <taxon>Embryophyta</taxon>
        <taxon>Tracheophyta</taxon>
        <taxon>Spermatophyta</taxon>
        <taxon>Magnoliopsida</taxon>
        <taxon>Liliopsida</taxon>
        <taxon>Asparagales</taxon>
        <taxon>Orchidaceae</taxon>
        <taxon>Epidendroideae</taxon>
        <taxon>Vandeae</taxon>
        <taxon>Aeridinae</taxon>
        <taxon>Phalaenopsis</taxon>
    </lineage>
</organism>
<gene>
    <name evidence="1" type="primary">atpE</name>
</gene>
<protein>
    <recommendedName>
        <fullName evidence="1">ATP synthase epsilon chain, chloroplastic</fullName>
    </recommendedName>
    <alternativeName>
        <fullName evidence="1">ATP synthase F1 sector epsilon subunit</fullName>
    </alternativeName>
    <alternativeName>
        <fullName evidence="1">F-ATPase epsilon subunit</fullName>
    </alternativeName>
</protein>
<proteinExistence type="inferred from homology"/>
<sequence length="134" mass="14628">MTLNLCVLTPNRMIWDSEVKEIILSTNSGQIGVLPNHAPIATAVDIGLLRIRLKDRWLTVALMGGFARISNNEITILGNGAEISTDIDPQEAQQTLEIAEANLSKAEGKRQAIEANLALRRARTRVEAIKVISS</sequence>
<dbReference type="EMBL" id="AY916449">
    <property type="protein sequence ID" value="AAW82506.1"/>
    <property type="molecule type" value="Genomic_DNA"/>
</dbReference>
<dbReference type="RefSeq" id="YP_358582.1">
    <property type="nucleotide sequence ID" value="NC_007499.1"/>
</dbReference>
<dbReference type="SMR" id="Q3BAN6"/>
<dbReference type="GeneID" id="3741685"/>
<dbReference type="GO" id="GO:0009535">
    <property type="term" value="C:chloroplast thylakoid membrane"/>
    <property type="evidence" value="ECO:0007669"/>
    <property type="project" value="UniProtKB-SubCell"/>
</dbReference>
<dbReference type="GO" id="GO:0045259">
    <property type="term" value="C:proton-transporting ATP synthase complex"/>
    <property type="evidence" value="ECO:0007669"/>
    <property type="project" value="UniProtKB-KW"/>
</dbReference>
<dbReference type="GO" id="GO:0005524">
    <property type="term" value="F:ATP binding"/>
    <property type="evidence" value="ECO:0007669"/>
    <property type="project" value="UniProtKB-UniRule"/>
</dbReference>
<dbReference type="GO" id="GO:0046933">
    <property type="term" value="F:proton-transporting ATP synthase activity, rotational mechanism"/>
    <property type="evidence" value="ECO:0007669"/>
    <property type="project" value="UniProtKB-UniRule"/>
</dbReference>
<dbReference type="CDD" id="cd12152">
    <property type="entry name" value="F1-ATPase_delta"/>
    <property type="match status" value="1"/>
</dbReference>
<dbReference type="FunFam" id="2.60.15.10:FF:000002">
    <property type="entry name" value="ATP synthase epsilon chain, chloroplastic"/>
    <property type="match status" value="1"/>
</dbReference>
<dbReference type="Gene3D" id="6.10.140.480">
    <property type="match status" value="1"/>
</dbReference>
<dbReference type="Gene3D" id="2.60.15.10">
    <property type="entry name" value="F0F1 ATP synthase delta/epsilon subunit, N-terminal"/>
    <property type="match status" value="1"/>
</dbReference>
<dbReference type="HAMAP" id="MF_00530">
    <property type="entry name" value="ATP_synth_epsil_bac"/>
    <property type="match status" value="1"/>
</dbReference>
<dbReference type="InterPro" id="IPR001469">
    <property type="entry name" value="ATP_synth_F1_dsu/esu"/>
</dbReference>
<dbReference type="InterPro" id="IPR020546">
    <property type="entry name" value="ATP_synth_F1_dsu/esu_N"/>
</dbReference>
<dbReference type="InterPro" id="IPR020547">
    <property type="entry name" value="ATP_synth_F1_esu_C"/>
</dbReference>
<dbReference type="InterPro" id="IPR036771">
    <property type="entry name" value="ATPsynth_dsu/esu_N"/>
</dbReference>
<dbReference type="NCBIfam" id="TIGR01216">
    <property type="entry name" value="ATP_synt_epsi"/>
    <property type="match status" value="1"/>
</dbReference>
<dbReference type="PANTHER" id="PTHR13822">
    <property type="entry name" value="ATP SYNTHASE DELTA/EPSILON CHAIN"/>
    <property type="match status" value="1"/>
</dbReference>
<dbReference type="PANTHER" id="PTHR13822:SF10">
    <property type="entry name" value="ATP SYNTHASE EPSILON CHAIN, CHLOROPLASTIC"/>
    <property type="match status" value="1"/>
</dbReference>
<dbReference type="Pfam" id="PF00401">
    <property type="entry name" value="ATP-synt_DE"/>
    <property type="match status" value="1"/>
</dbReference>
<dbReference type="Pfam" id="PF02823">
    <property type="entry name" value="ATP-synt_DE_N"/>
    <property type="match status" value="1"/>
</dbReference>
<dbReference type="SUPFAM" id="SSF51344">
    <property type="entry name" value="Epsilon subunit of F1F0-ATP synthase N-terminal domain"/>
    <property type="match status" value="1"/>
</dbReference>
<geneLocation type="chloroplast"/>
<name>ATPE_PHAAO</name>
<keyword id="KW-0066">ATP synthesis</keyword>
<keyword id="KW-0139">CF(1)</keyword>
<keyword id="KW-0150">Chloroplast</keyword>
<keyword id="KW-0375">Hydrogen ion transport</keyword>
<keyword id="KW-0406">Ion transport</keyword>
<keyword id="KW-0472">Membrane</keyword>
<keyword id="KW-0934">Plastid</keyword>
<keyword id="KW-0793">Thylakoid</keyword>
<keyword id="KW-0813">Transport</keyword>
<accession>Q3BAN6</accession>
<comment type="function">
    <text evidence="1">Produces ATP from ADP in the presence of a proton gradient across the membrane.</text>
</comment>
<comment type="subunit">
    <text evidence="1">F-type ATPases have 2 components, CF(1) - the catalytic core - and CF(0) - the membrane proton channel. CF(1) has five subunits: alpha(3), beta(3), gamma(1), delta(1), epsilon(1). CF(0) has three main subunits: a, b and c.</text>
</comment>
<comment type="subcellular location">
    <subcellularLocation>
        <location evidence="1">Plastid</location>
        <location evidence="1">Chloroplast thylakoid membrane</location>
        <topology evidence="1">Peripheral membrane protein</topology>
    </subcellularLocation>
</comment>
<comment type="similarity">
    <text evidence="1">Belongs to the ATPase epsilon chain family.</text>
</comment>
<reference key="1">
    <citation type="journal article" date="2006" name="Mol. Biol. Evol.">
        <title>The chloroplast genome of Phalaenopsis aphrodite (Orchidaceae): comparative analysis of evolutionary rate with that of grasses and its phylogenetic implications.</title>
        <authorList>
            <person name="Chang C.-C."/>
            <person name="Lin H.-C."/>
            <person name="Lin I.-P."/>
            <person name="Chow T.-Y."/>
            <person name="Chen H.-H."/>
            <person name="Chen W.-H."/>
            <person name="Cheng C.-H."/>
            <person name="Lin C.-Y."/>
            <person name="Liu S.-M."/>
            <person name="Chang C.-C."/>
            <person name="Chaw S.-M."/>
        </authorList>
    </citation>
    <scope>NUCLEOTIDE SEQUENCE [LARGE SCALE GENOMIC DNA]</scope>
    <source>
        <strain>cv. Taisugar TS-97</strain>
    </source>
</reference>
<feature type="chain" id="PRO_0000275212" description="ATP synthase epsilon chain, chloroplastic">
    <location>
        <begin position="1"/>
        <end position="134"/>
    </location>
</feature>
<evidence type="ECO:0000255" key="1">
    <source>
        <dbReference type="HAMAP-Rule" id="MF_00530"/>
    </source>
</evidence>